<keyword id="KW-0004">4Fe-4S</keyword>
<keyword id="KW-0997">Cell inner membrane</keyword>
<keyword id="KW-1003">Cell membrane</keyword>
<keyword id="KW-0408">Iron</keyword>
<keyword id="KW-0411">Iron-sulfur</keyword>
<keyword id="KW-0472">Membrane</keyword>
<keyword id="KW-0479">Metal-binding</keyword>
<keyword id="KW-0520">NAD</keyword>
<keyword id="KW-0874">Quinone</keyword>
<keyword id="KW-1185">Reference proteome</keyword>
<keyword id="KW-1278">Translocase</keyword>
<keyword id="KW-0813">Transport</keyword>
<keyword id="KW-0830">Ubiquinone</keyword>
<sequence length="187" mass="20869">MTADHNRALHDAPTARGGEVRQPDGDYFNALQTEVNDKGFLVTSTEDLFQWARTGSLWWMTFGLACCAVEMIHVNMPRYDMERFGAAPRASPRQSDVMIVAGTLCNKMAPALRKVYDQMSDPKYVISMGSCANGGGYYHYSYSVVRGCDRIVPVDIYVPGCPPTAEALLYGVMQLQRKIRRSGTIER</sequence>
<gene>
    <name evidence="2" type="primary">nuoB</name>
    <name type="ordered locus">ELI_06690</name>
</gene>
<proteinExistence type="inferred from homology"/>
<reference key="1">
    <citation type="journal article" date="2009" name="J. Bacteriol.">
        <title>Complete genome sequence of Erythrobacter litoralis HTCC2594.</title>
        <authorList>
            <person name="Oh H.M."/>
            <person name="Giovannoni S.J."/>
            <person name="Ferriera S."/>
            <person name="Johnson J."/>
            <person name="Cho J.C."/>
        </authorList>
    </citation>
    <scope>NUCLEOTIDE SEQUENCE [LARGE SCALE GENOMIC DNA]</scope>
    <source>
        <strain>HTCC2594</strain>
    </source>
</reference>
<accession>Q2NA61</accession>
<dbReference type="EC" id="7.1.1.-" evidence="2"/>
<dbReference type="EMBL" id="CP000157">
    <property type="protein sequence ID" value="ABC63430.1"/>
    <property type="status" value="ALT_INIT"/>
    <property type="molecule type" value="Genomic_DNA"/>
</dbReference>
<dbReference type="RefSeq" id="WP_196793234.1">
    <property type="nucleotide sequence ID" value="NC_007722.1"/>
</dbReference>
<dbReference type="SMR" id="Q2NA61"/>
<dbReference type="STRING" id="314225.ELI_06690"/>
<dbReference type="KEGG" id="eli:ELI_06690"/>
<dbReference type="eggNOG" id="COG0377">
    <property type="taxonomic scope" value="Bacteria"/>
</dbReference>
<dbReference type="HOGENOM" id="CLU_055737_7_0_5"/>
<dbReference type="Proteomes" id="UP000008808">
    <property type="component" value="Chromosome"/>
</dbReference>
<dbReference type="GO" id="GO:0005886">
    <property type="term" value="C:plasma membrane"/>
    <property type="evidence" value="ECO:0007669"/>
    <property type="project" value="UniProtKB-SubCell"/>
</dbReference>
<dbReference type="GO" id="GO:0045271">
    <property type="term" value="C:respiratory chain complex I"/>
    <property type="evidence" value="ECO:0007669"/>
    <property type="project" value="TreeGrafter"/>
</dbReference>
<dbReference type="GO" id="GO:0051539">
    <property type="term" value="F:4 iron, 4 sulfur cluster binding"/>
    <property type="evidence" value="ECO:0007669"/>
    <property type="project" value="UniProtKB-KW"/>
</dbReference>
<dbReference type="GO" id="GO:0005506">
    <property type="term" value="F:iron ion binding"/>
    <property type="evidence" value="ECO:0007669"/>
    <property type="project" value="UniProtKB-UniRule"/>
</dbReference>
<dbReference type="GO" id="GO:0008137">
    <property type="term" value="F:NADH dehydrogenase (ubiquinone) activity"/>
    <property type="evidence" value="ECO:0007669"/>
    <property type="project" value="InterPro"/>
</dbReference>
<dbReference type="GO" id="GO:0050136">
    <property type="term" value="F:NADH:ubiquinone reductase (non-electrogenic) activity"/>
    <property type="evidence" value="ECO:0007669"/>
    <property type="project" value="UniProtKB-UniRule"/>
</dbReference>
<dbReference type="GO" id="GO:0048038">
    <property type="term" value="F:quinone binding"/>
    <property type="evidence" value="ECO:0007669"/>
    <property type="project" value="UniProtKB-KW"/>
</dbReference>
<dbReference type="GO" id="GO:0009060">
    <property type="term" value="P:aerobic respiration"/>
    <property type="evidence" value="ECO:0007669"/>
    <property type="project" value="TreeGrafter"/>
</dbReference>
<dbReference type="GO" id="GO:0015990">
    <property type="term" value="P:electron transport coupled proton transport"/>
    <property type="evidence" value="ECO:0007669"/>
    <property type="project" value="TreeGrafter"/>
</dbReference>
<dbReference type="FunFam" id="3.40.50.12280:FF:000001">
    <property type="entry name" value="NADH-quinone oxidoreductase subunit B 2"/>
    <property type="match status" value="1"/>
</dbReference>
<dbReference type="Gene3D" id="3.40.50.12280">
    <property type="match status" value="1"/>
</dbReference>
<dbReference type="HAMAP" id="MF_01356">
    <property type="entry name" value="NDH1_NuoB"/>
    <property type="match status" value="1"/>
</dbReference>
<dbReference type="InterPro" id="IPR006137">
    <property type="entry name" value="NADH_UbQ_OxRdtase-like_20kDa"/>
</dbReference>
<dbReference type="InterPro" id="IPR006138">
    <property type="entry name" value="NADH_UQ_OxRdtase_20Kd_su"/>
</dbReference>
<dbReference type="NCBIfam" id="TIGR01957">
    <property type="entry name" value="nuoB_fam"/>
    <property type="match status" value="1"/>
</dbReference>
<dbReference type="NCBIfam" id="NF005012">
    <property type="entry name" value="PRK06411.1"/>
    <property type="match status" value="1"/>
</dbReference>
<dbReference type="PANTHER" id="PTHR11995">
    <property type="entry name" value="NADH DEHYDROGENASE"/>
    <property type="match status" value="1"/>
</dbReference>
<dbReference type="PANTHER" id="PTHR11995:SF14">
    <property type="entry name" value="NADH DEHYDROGENASE [UBIQUINONE] IRON-SULFUR PROTEIN 7, MITOCHONDRIAL"/>
    <property type="match status" value="1"/>
</dbReference>
<dbReference type="Pfam" id="PF01058">
    <property type="entry name" value="Oxidored_q6"/>
    <property type="match status" value="1"/>
</dbReference>
<dbReference type="SUPFAM" id="SSF56770">
    <property type="entry name" value="HydA/Nqo6-like"/>
    <property type="match status" value="1"/>
</dbReference>
<dbReference type="PROSITE" id="PS01150">
    <property type="entry name" value="COMPLEX1_20K"/>
    <property type="match status" value="1"/>
</dbReference>
<protein>
    <recommendedName>
        <fullName evidence="2">NADH-quinone oxidoreductase subunit B</fullName>
        <ecNumber evidence="2">7.1.1.-</ecNumber>
    </recommendedName>
    <alternativeName>
        <fullName evidence="2">NADH dehydrogenase I subunit B</fullName>
    </alternativeName>
    <alternativeName>
        <fullName evidence="2">NDH-1 subunit B</fullName>
    </alternativeName>
</protein>
<organism>
    <name type="scientific">Erythrobacter litoralis (strain HTCC2594)</name>
    <dbReference type="NCBI Taxonomy" id="314225"/>
    <lineage>
        <taxon>Bacteria</taxon>
        <taxon>Pseudomonadati</taxon>
        <taxon>Pseudomonadota</taxon>
        <taxon>Alphaproteobacteria</taxon>
        <taxon>Sphingomonadales</taxon>
        <taxon>Erythrobacteraceae</taxon>
        <taxon>Erythrobacter/Porphyrobacter group</taxon>
        <taxon>Erythrobacter</taxon>
    </lineage>
</organism>
<evidence type="ECO:0000250" key="1"/>
<evidence type="ECO:0000255" key="2">
    <source>
        <dbReference type="HAMAP-Rule" id="MF_01356"/>
    </source>
</evidence>
<evidence type="ECO:0000256" key="3">
    <source>
        <dbReference type="SAM" id="MobiDB-lite"/>
    </source>
</evidence>
<evidence type="ECO:0000305" key="4"/>
<feature type="chain" id="PRO_0000358407" description="NADH-quinone oxidoreductase subunit B">
    <location>
        <begin position="1"/>
        <end position="187"/>
    </location>
</feature>
<feature type="region of interest" description="Disordered" evidence="3">
    <location>
        <begin position="1"/>
        <end position="22"/>
    </location>
</feature>
<feature type="compositionally biased region" description="Basic and acidic residues" evidence="3">
    <location>
        <begin position="1"/>
        <end position="10"/>
    </location>
</feature>
<feature type="binding site" evidence="2">
    <location>
        <position position="66"/>
    </location>
    <ligand>
        <name>[4Fe-4S] cluster</name>
        <dbReference type="ChEBI" id="CHEBI:49883"/>
    </ligand>
</feature>
<feature type="binding site" evidence="2">
    <location>
        <position position="67"/>
    </location>
    <ligand>
        <name>[4Fe-4S] cluster</name>
        <dbReference type="ChEBI" id="CHEBI:49883"/>
    </ligand>
</feature>
<feature type="binding site" evidence="2">
    <location>
        <position position="131"/>
    </location>
    <ligand>
        <name>[4Fe-4S] cluster</name>
        <dbReference type="ChEBI" id="CHEBI:49883"/>
    </ligand>
</feature>
<feature type="binding site" evidence="2">
    <location>
        <position position="161"/>
    </location>
    <ligand>
        <name>[4Fe-4S] cluster</name>
        <dbReference type="ChEBI" id="CHEBI:49883"/>
    </ligand>
</feature>
<comment type="function">
    <text evidence="1">NDH-1 shuttles electrons from NADH, via FMN and iron-sulfur (Fe-S) centers, to quinones in the respiratory chain. Couples the redox reaction to proton translocation (for every two electrons transferred, four hydrogen ions are translocated across the cytoplasmic membrane), and thus conserves the redox energy in a proton gradient (By similarity).</text>
</comment>
<comment type="catalytic activity">
    <reaction evidence="2">
        <text>a quinone + NADH + 5 H(+)(in) = a quinol + NAD(+) + 4 H(+)(out)</text>
        <dbReference type="Rhea" id="RHEA:57888"/>
        <dbReference type="ChEBI" id="CHEBI:15378"/>
        <dbReference type="ChEBI" id="CHEBI:24646"/>
        <dbReference type="ChEBI" id="CHEBI:57540"/>
        <dbReference type="ChEBI" id="CHEBI:57945"/>
        <dbReference type="ChEBI" id="CHEBI:132124"/>
    </reaction>
</comment>
<comment type="cofactor">
    <cofactor evidence="2">
        <name>[4Fe-4S] cluster</name>
        <dbReference type="ChEBI" id="CHEBI:49883"/>
    </cofactor>
    <text evidence="2">Binds 1 [4Fe-4S] cluster.</text>
</comment>
<comment type="subunit">
    <text evidence="2">NDH-1 is composed of 14 different subunits. Subunits NuoB, C, D, E, F, and G constitute the peripheral sector of the complex.</text>
</comment>
<comment type="subcellular location">
    <subcellularLocation>
        <location evidence="2">Cell inner membrane</location>
        <topology evidence="2">Peripheral membrane protein</topology>
        <orientation evidence="2">Cytoplasmic side</orientation>
    </subcellularLocation>
</comment>
<comment type="similarity">
    <text evidence="2">Belongs to the complex I 20 kDa subunit family.</text>
</comment>
<comment type="sequence caution" evidence="4">
    <conflict type="erroneous initiation">
        <sequence resource="EMBL-CDS" id="ABC63430"/>
    </conflict>
</comment>
<name>NUOB_ERYLH</name>